<keyword id="KW-0460">Magnesium</keyword>
<keyword id="KW-0479">Metal-binding</keyword>
<keyword id="KW-0808">Transferase</keyword>
<feature type="chain" id="PRO_0000123681" description="Isoprenyl transferase">
    <location>
        <begin position="1"/>
        <end position="250"/>
    </location>
</feature>
<feature type="active site" evidence="1">
    <location>
        <position position="26"/>
    </location>
</feature>
<feature type="active site" description="Proton acceptor" evidence="1">
    <location>
        <position position="74"/>
    </location>
</feature>
<feature type="binding site" evidence="1">
    <location>
        <position position="26"/>
    </location>
    <ligand>
        <name>Mg(2+)</name>
        <dbReference type="ChEBI" id="CHEBI:18420"/>
    </ligand>
</feature>
<feature type="binding site" evidence="1">
    <location>
        <begin position="27"/>
        <end position="30"/>
    </location>
    <ligand>
        <name>substrate</name>
    </ligand>
</feature>
<feature type="binding site" evidence="1">
    <location>
        <position position="31"/>
    </location>
    <ligand>
        <name>substrate</name>
    </ligand>
</feature>
<feature type="binding site" evidence="1">
    <location>
        <position position="39"/>
    </location>
    <ligand>
        <name>substrate</name>
    </ligand>
</feature>
<feature type="binding site" evidence="1">
    <location>
        <position position="43"/>
    </location>
    <ligand>
        <name>substrate</name>
    </ligand>
</feature>
<feature type="binding site" evidence="1">
    <location>
        <begin position="71"/>
        <end position="73"/>
    </location>
    <ligand>
        <name>substrate</name>
    </ligand>
</feature>
<feature type="binding site" evidence="1">
    <location>
        <position position="75"/>
    </location>
    <ligand>
        <name>substrate</name>
    </ligand>
</feature>
<feature type="binding site" evidence="1">
    <location>
        <position position="77"/>
    </location>
    <ligand>
        <name>substrate</name>
    </ligand>
</feature>
<feature type="binding site" evidence="1">
    <location>
        <position position="198"/>
    </location>
    <ligand>
        <name>substrate</name>
    </ligand>
</feature>
<feature type="binding site" evidence="1">
    <location>
        <begin position="204"/>
        <end position="206"/>
    </location>
    <ligand>
        <name>substrate</name>
    </ligand>
</feature>
<feature type="binding site" evidence="1">
    <location>
        <position position="217"/>
    </location>
    <ligand>
        <name>Mg(2+)</name>
        <dbReference type="ChEBI" id="CHEBI:18420"/>
    </ligand>
</feature>
<comment type="function">
    <text evidence="1">Catalyzes the condensation of isopentenyl diphosphate (IPP) with allylic pyrophosphates generating different type of terpenoids.</text>
</comment>
<comment type="cofactor">
    <cofactor evidence="1">
        <name>Mg(2+)</name>
        <dbReference type="ChEBI" id="CHEBI:18420"/>
    </cofactor>
    <text evidence="1">Binds 2 magnesium ions per subunit.</text>
</comment>
<comment type="subunit">
    <text evidence="1">Homodimer.</text>
</comment>
<comment type="similarity">
    <text evidence="1">Belongs to the UPP synthase family.</text>
</comment>
<sequence length="250" mass="28755">MFIFKRKKQVEMPLEKIPAHIGIIMDGNGRWAKKRLKPRVMGHKAGMDALQEVTIAASGLGVKVLTVYAFSTENWSRPDDEVKFIMNLPVEFFDKYVPELDKNNVRVQVIGDTHKLPKATYDAMQRACLRTKHNSGLVLNFALNYGGRSEITNAIKEIAQDVLEAKLNPDDITEDLVANHLMTNSLPYLYRDPDLIIRTSGELRLSNFLPWQSAYSEFYFTPVLWPDFKKDELHKAIVDYNQRHRRFGSV</sequence>
<name>ISPT_STRA3</name>
<evidence type="ECO:0000255" key="1">
    <source>
        <dbReference type="HAMAP-Rule" id="MF_01139"/>
    </source>
</evidence>
<reference key="1">
    <citation type="journal article" date="2002" name="Mol. Microbiol.">
        <title>Genome sequence of Streptococcus agalactiae, a pathogen causing invasive neonatal disease.</title>
        <authorList>
            <person name="Glaser P."/>
            <person name="Rusniok C."/>
            <person name="Buchrieser C."/>
            <person name="Chevalier F."/>
            <person name="Frangeul L."/>
            <person name="Msadek T."/>
            <person name="Zouine M."/>
            <person name="Couve E."/>
            <person name="Lalioui L."/>
            <person name="Poyart C."/>
            <person name="Trieu-Cuot P."/>
            <person name="Kunst F."/>
        </authorList>
    </citation>
    <scope>NUCLEOTIDE SEQUENCE [LARGE SCALE GENOMIC DNA]</scope>
    <source>
        <strain>NEM316</strain>
    </source>
</reference>
<protein>
    <recommendedName>
        <fullName evidence="1">Isoprenyl transferase</fullName>
        <ecNumber evidence="1">2.5.1.-</ecNumber>
    </recommendedName>
</protein>
<dbReference type="EC" id="2.5.1.-" evidence="1"/>
<dbReference type="EMBL" id="AL766854">
    <property type="protein sequence ID" value="CAD47562.1"/>
    <property type="molecule type" value="Genomic_DNA"/>
</dbReference>
<dbReference type="RefSeq" id="WP_000469562.1">
    <property type="nucleotide sequence ID" value="NC_004368.1"/>
</dbReference>
<dbReference type="SMR" id="Q8E359"/>
<dbReference type="KEGG" id="san:gbs1903"/>
<dbReference type="eggNOG" id="COG0020">
    <property type="taxonomic scope" value="Bacteria"/>
</dbReference>
<dbReference type="HOGENOM" id="CLU_038505_1_1_9"/>
<dbReference type="Proteomes" id="UP000000823">
    <property type="component" value="Chromosome"/>
</dbReference>
<dbReference type="GO" id="GO:0005829">
    <property type="term" value="C:cytosol"/>
    <property type="evidence" value="ECO:0007669"/>
    <property type="project" value="TreeGrafter"/>
</dbReference>
<dbReference type="GO" id="GO:0008834">
    <property type="term" value="F:ditrans,polycis-undecaprenyl-diphosphate synthase [(2E,6E)-farnesyl-diphosphate specific] activity"/>
    <property type="evidence" value="ECO:0007669"/>
    <property type="project" value="TreeGrafter"/>
</dbReference>
<dbReference type="GO" id="GO:0000287">
    <property type="term" value="F:magnesium ion binding"/>
    <property type="evidence" value="ECO:0007669"/>
    <property type="project" value="UniProtKB-UniRule"/>
</dbReference>
<dbReference type="GO" id="GO:0030145">
    <property type="term" value="F:manganese ion binding"/>
    <property type="evidence" value="ECO:0007669"/>
    <property type="project" value="TreeGrafter"/>
</dbReference>
<dbReference type="GO" id="GO:0016094">
    <property type="term" value="P:polyprenol biosynthetic process"/>
    <property type="evidence" value="ECO:0007669"/>
    <property type="project" value="TreeGrafter"/>
</dbReference>
<dbReference type="CDD" id="cd00475">
    <property type="entry name" value="Cis_IPPS"/>
    <property type="match status" value="1"/>
</dbReference>
<dbReference type="FunFam" id="3.40.1180.10:FF:000001">
    <property type="entry name" value="(2E,6E)-farnesyl-diphosphate-specific ditrans,polycis-undecaprenyl-diphosphate synthase"/>
    <property type="match status" value="1"/>
</dbReference>
<dbReference type="Gene3D" id="3.40.1180.10">
    <property type="entry name" value="Decaprenyl diphosphate synthase-like"/>
    <property type="match status" value="1"/>
</dbReference>
<dbReference type="HAMAP" id="MF_01139">
    <property type="entry name" value="ISPT"/>
    <property type="match status" value="1"/>
</dbReference>
<dbReference type="InterPro" id="IPR001441">
    <property type="entry name" value="UPP_synth-like"/>
</dbReference>
<dbReference type="InterPro" id="IPR018520">
    <property type="entry name" value="UPP_synth-like_CS"/>
</dbReference>
<dbReference type="InterPro" id="IPR036424">
    <property type="entry name" value="UPP_synth-like_sf"/>
</dbReference>
<dbReference type="NCBIfam" id="NF011405">
    <property type="entry name" value="PRK14830.1"/>
    <property type="match status" value="1"/>
</dbReference>
<dbReference type="NCBIfam" id="TIGR00055">
    <property type="entry name" value="uppS"/>
    <property type="match status" value="1"/>
</dbReference>
<dbReference type="PANTHER" id="PTHR10291:SF0">
    <property type="entry name" value="DEHYDRODOLICHYL DIPHOSPHATE SYNTHASE 2"/>
    <property type="match status" value="1"/>
</dbReference>
<dbReference type="PANTHER" id="PTHR10291">
    <property type="entry name" value="DEHYDRODOLICHYL DIPHOSPHATE SYNTHASE FAMILY MEMBER"/>
    <property type="match status" value="1"/>
</dbReference>
<dbReference type="Pfam" id="PF01255">
    <property type="entry name" value="Prenyltransf"/>
    <property type="match status" value="1"/>
</dbReference>
<dbReference type="SUPFAM" id="SSF64005">
    <property type="entry name" value="Undecaprenyl diphosphate synthase"/>
    <property type="match status" value="1"/>
</dbReference>
<dbReference type="PROSITE" id="PS01066">
    <property type="entry name" value="UPP_SYNTHASE"/>
    <property type="match status" value="1"/>
</dbReference>
<accession>Q8E359</accession>
<proteinExistence type="inferred from homology"/>
<gene>
    <name evidence="1" type="primary">uppS</name>
    <name type="ordered locus">gbs1903</name>
</gene>
<organism>
    <name type="scientific">Streptococcus agalactiae serotype III (strain NEM316)</name>
    <dbReference type="NCBI Taxonomy" id="211110"/>
    <lineage>
        <taxon>Bacteria</taxon>
        <taxon>Bacillati</taxon>
        <taxon>Bacillota</taxon>
        <taxon>Bacilli</taxon>
        <taxon>Lactobacillales</taxon>
        <taxon>Streptococcaceae</taxon>
        <taxon>Streptococcus</taxon>
    </lineage>
</organism>